<protein>
    <recommendedName>
        <fullName>Putative nitronate monooxygenase</fullName>
        <ecNumber>1.13.12.16</ecNumber>
    </recommendedName>
    <alternativeName>
        <fullName>Nitroalkane oxidase</fullName>
    </alternativeName>
</protein>
<name>2NDP_YEAST</name>
<evidence type="ECO:0000250" key="1"/>
<evidence type="ECO:0000255" key="2"/>
<evidence type="ECO:0000269" key="3">
    <source>
    </source>
</evidence>
<evidence type="ECO:0000269" key="4">
    <source>
    </source>
</evidence>
<evidence type="ECO:0000305" key="5"/>
<keyword id="KW-0963">Cytoplasm</keyword>
<keyword id="KW-0285">Flavoprotein</keyword>
<keyword id="KW-0288">FMN</keyword>
<keyword id="KW-0503">Monooxygenase</keyword>
<keyword id="KW-0560">Oxidoreductase</keyword>
<keyword id="KW-1185">Reference proteome</keyword>
<organism>
    <name type="scientific">Saccharomyces cerevisiae (strain ATCC 204508 / S288c)</name>
    <name type="common">Baker's yeast</name>
    <dbReference type="NCBI Taxonomy" id="559292"/>
    <lineage>
        <taxon>Eukaryota</taxon>
        <taxon>Fungi</taxon>
        <taxon>Dikarya</taxon>
        <taxon>Ascomycota</taxon>
        <taxon>Saccharomycotina</taxon>
        <taxon>Saccharomycetes</taxon>
        <taxon>Saccharomycetales</taxon>
        <taxon>Saccharomycetaceae</taxon>
        <taxon>Saccharomyces</taxon>
    </lineage>
</organism>
<feature type="chain" id="PRO_0000203128" description="Putative nitronate monooxygenase">
    <location>
        <begin position="1"/>
        <end position="404"/>
    </location>
</feature>
<feature type="active site" description="Proton acceptor" evidence="2">
    <location>
        <position position="224"/>
    </location>
</feature>
<feature type="binding site" evidence="1">
    <location>
        <begin position="41"/>
        <end position="43"/>
    </location>
    <ligand>
        <name>FMN</name>
        <dbReference type="ChEBI" id="CHEBI:58210"/>
    </ligand>
</feature>
<feature type="binding site" evidence="1">
    <location>
        <position position="224"/>
    </location>
    <ligand>
        <name>substrate</name>
    </ligand>
</feature>
<feature type="binding site" evidence="1">
    <location>
        <begin position="270"/>
        <end position="272"/>
    </location>
    <ligand>
        <name>FMN</name>
        <dbReference type="ChEBI" id="CHEBI:58210"/>
    </ligand>
</feature>
<feature type="binding site" evidence="1">
    <location>
        <begin position="293"/>
        <end position="294"/>
    </location>
    <ligand>
        <name>FMN</name>
        <dbReference type="ChEBI" id="CHEBI:58210"/>
    </ligand>
</feature>
<feature type="sequence conflict" description="In Ref. 1; CAA89682." evidence="5" ref="1">
    <original>D</original>
    <variation>V</variation>
    <location>
        <position position="402"/>
    </location>
</feature>
<proteinExistence type="evidence at protein level"/>
<gene>
    <name type="ordered locus">YJR149W</name>
    <name type="ORF">J2213</name>
</gene>
<dbReference type="EC" id="1.13.12.16"/>
<dbReference type="EMBL" id="Z49649">
    <property type="protein sequence ID" value="CAA89682.1"/>
    <property type="molecule type" value="Genomic_DNA"/>
</dbReference>
<dbReference type="EMBL" id="BK006943">
    <property type="protein sequence ID" value="DAA08933.2"/>
    <property type="molecule type" value="Genomic_DNA"/>
</dbReference>
<dbReference type="PIR" id="S57178">
    <property type="entry name" value="S57178"/>
</dbReference>
<dbReference type="RefSeq" id="NP_012683.4">
    <property type="nucleotide sequence ID" value="NM_001181807.4"/>
</dbReference>
<dbReference type="SMR" id="P47177"/>
<dbReference type="BioGRID" id="33904">
    <property type="interactions" value="74"/>
</dbReference>
<dbReference type="FunCoup" id="P47177">
    <property type="interactions" value="50"/>
</dbReference>
<dbReference type="IntAct" id="P47177">
    <property type="interactions" value="5"/>
</dbReference>
<dbReference type="MINT" id="P47177"/>
<dbReference type="STRING" id="4932.YJR149W"/>
<dbReference type="iPTMnet" id="P47177"/>
<dbReference type="PaxDb" id="4932-YJR149W"/>
<dbReference type="PeptideAtlas" id="P47177"/>
<dbReference type="EnsemblFungi" id="YJR149W_mRNA">
    <property type="protein sequence ID" value="YJR149W"/>
    <property type="gene ID" value="YJR149W"/>
</dbReference>
<dbReference type="GeneID" id="853614"/>
<dbReference type="KEGG" id="sce:YJR149W"/>
<dbReference type="AGR" id="SGD:S000003910"/>
<dbReference type="SGD" id="S000003910">
    <property type="gene designation" value="YJR149W"/>
</dbReference>
<dbReference type="VEuPathDB" id="FungiDB:YJR149W"/>
<dbReference type="eggNOG" id="ENOG502S1Q4">
    <property type="taxonomic scope" value="Eukaryota"/>
</dbReference>
<dbReference type="HOGENOM" id="CLU_038732_5_0_1"/>
<dbReference type="InParanoid" id="P47177"/>
<dbReference type="OMA" id="NLFCHAP"/>
<dbReference type="OrthoDB" id="10265891at2759"/>
<dbReference type="BioCyc" id="YEAST:G3O-31762-MONOMER"/>
<dbReference type="BioGRID-ORCS" id="853614">
    <property type="hits" value="0 hits in 10 CRISPR screens"/>
</dbReference>
<dbReference type="PRO" id="PR:P47177"/>
<dbReference type="Proteomes" id="UP000002311">
    <property type="component" value="Chromosome X"/>
</dbReference>
<dbReference type="RNAct" id="P47177">
    <property type="molecule type" value="protein"/>
</dbReference>
<dbReference type="GO" id="GO:0005737">
    <property type="term" value="C:cytoplasm"/>
    <property type="evidence" value="ECO:0007005"/>
    <property type="project" value="SGD"/>
</dbReference>
<dbReference type="GO" id="GO:0018580">
    <property type="term" value="F:nitronate monooxygenase activity"/>
    <property type="evidence" value="ECO:0000318"/>
    <property type="project" value="GO_Central"/>
</dbReference>
<dbReference type="CDD" id="cd04730">
    <property type="entry name" value="NPD_like"/>
    <property type="match status" value="1"/>
</dbReference>
<dbReference type="FunFam" id="3.20.20.70:FF:000344">
    <property type="entry name" value="Conserved protein"/>
    <property type="match status" value="1"/>
</dbReference>
<dbReference type="Gene3D" id="3.20.20.70">
    <property type="entry name" value="Aldolase class I"/>
    <property type="match status" value="1"/>
</dbReference>
<dbReference type="InterPro" id="IPR013785">
    <property type="entry name" value="Aldolase_TIM"/>
</dbReference>
<dbReference type="InterPro" id="IPR004136">
    <property type="entry name" value="NMO"/>
</dbReference>
<dbReference type="PANTHER" id="PTHR42747">
    <property type="entry name" value="NITRONATE MONOOXYGENASE-RELATED"/>
    <property type="match status" value="1"/>
</dbReference>
<dbReference type="PANTHER" id="PTHR42747:SF3">
    <property type="entry name" value="NITRONATE MONOOXYGENASE-RELATED"/>
    <property type="match status" value="1"/>
</dbReference>
<dbReference type="Pfam" id="PF03060">
    <property type="entry name" value="NMO"/>
    <property type="match status" value="1"/>
</dbReference>
<dbReference type="SUPFAM" id="SSF51412">
    <property type="entry name" value="Inosine monophosphate dehydrogenase (IMPDH)"/>
    <property type="match status" value="1"/>
</dbReference>
<comment type="function">
    <text evidence="1">Catalyzes the oxidation of alkyl nitronates to produce the corresponding carbonyl compounds and nitrites.</text>
</comment>
<comment type="catalytic activity">
    <reaction>
        <text>ethylnitronate + O2 = chemical entity + acetaldehyde + nitrite + H(+)</text>
        <dbReference type="Rhea" id="RHEA:28767"/>
        <dbReference type="ChEBI" id="CHEBI:15343"/>
        <dbReference type="ChEBI" id="CHEBI:15378"/>
        <dbReference type="ChEBI" id="CHEBI:15379"/>
        <dbReference type="ChEBI" id="CHEBI:16301"/>
        <dbReference type="ChEBI" id="CHEBI:24431"/>
        <dbReference type="ChEBI" id="CHEBI:77894"/>
        <dbReference type="EC" id="1.13.12.16"/>
    </reaction>
</comment>
<comment type="cofactor">
    <cofactor evidence="1">
        <name>FMN</name>
        <dbReference type="ChEBI" id="CHEBI:58210"/>
    </cofactor>
    <text evidence="1">Binds 1 FMN per subunit.</text>
</comment>
<comment type="subcellular location">
    <subcellularLocation>
        <location evidence="3">Cytoplasm</location>
    </subcellularLocation>
</comment>
<comment type="miscellaneous">
    <text evidence="4">Present with 172 molecules/cell in log phase SD medium.</text>
</comment>
<comment type="similarity">
    <text evidence="5">Belongs to the nitronate monooxygenase family. NMO class I subfamily.</text>
</comment>
<sequence>MYFLNQLIFQDVSVMSVDKREDMSRSFQKCLNLRYPIIQAPMAGVTTIEMAAKACIAGAIASLPLSHLDFRKVNDIEKLKLMVSQFRDQVADESLEGNLNLNFFCHDIVDKPTDLQTANWAKLYRKSMNVPIDMNEIKFDNGNVSFKAFEKENALQDFFQYLSDGFRPKIISFHFGHPSKSTIEYLQKIGILIFVTATSVREVRLLARLGINGIVCQGYEAGGHRGNFLVNDPKDDENLSTVQLVKRTVDELAEMKNKGLIHATPFVIAAGGIMDSKDISYMLSQQADAVQVGTAFLGCSESNASKNFSSPFTRETTTKMVNIISGKPARTISTPFIEKVIANFQGEELPPYGYMYSAFKQVRKKYPELANFILAGQGFQNVQSGITTDKKIETMGARLKIDGK</sequence>
<accession>P47177</accession>
<accession>D6VWW7</accession>
<reference key="1">
    <citation type="journal article" date="1996" name="EMBO J.">
        <title>Complete nucleotide sequence of Saccharomyces cerevisiae chromosome X.</title>
        <authorList>
            <person name="Galibert F."/>
            <person name="Alexandraki D."/>
            <person name="Baur A."/>
            <person name="Boles E."/>
            <person name="Chalwatzis N."/>
            <person name="Chuat J.-C."/>
            <person name="Coster F."/>
            <person name="Cziepluch C."/>
            <person name="de Haan M."/>
            <person name="Domdey H."/>
            <person name="Durand P."/>
            <person name="Entian K.-D."/>
            <person name="Gatius M."/>
            <person name="Goffeau A."/>
            <person name="Grivell L.A."/>
            <person name="Hennemann A."/>
            <person name="Herbert C.J."/>
            <person name="Heumann K."/>
            <person name="Hilger F."/>
            <person name="Hollenberg C.P."/>
            <person name="Huang M.-E."/>
            <person name="Jacq C."/>
            <person name="Jauniaux J.-C."/>
            <person name="Katsoulou C."/>
            <person name="Kirchrath L."/>
            <person name="Kleine K."/>
            <person name="Kordes E."/>
            <person name="Koetter P."/>
            <person name="Liebl S."/>
            <person name="Louis E.J."/>
            <person name="Manus V."/>
            <person name="Mewes H.-W."/>
            <person name="Miosga T."/>
            <person name="Obermaier B."/>
            <person name="Perea J."/>
            <person name="Pohl T.M."/>
            <person name="Portetelle D."/>
            <person name="Pujol A."/>
            <person name="Purnelle B."/>
            <person name="Ramezani Rad M."/>
            <person name="Rasmussen S.W."/>
            <person name="Rose M."/>
            <person name="Rossau R."/>
            <person name="Schaaff-Gerstenschlaeger I."/>
            <person name="Smits P.H.M."/>
            <person name="Scarcez T."/>
            <person name="Soriano N."/>
            <person name="To Van D."/>
            <person name="Tzermia M."/>
            <person name="Van Broekhoven A."/>
            <person name="Vandenbol M."/>
            <person name="Wedler H."/>
            <person name="von Wettstein D."/>
            <person name="Wambutt R."/>
            <person name="Zagulski M."/>
            <person name="Zollner A."/>
            <person name="Karpfinger-Hartl L."/>
        </authorList>
    </citation>
    <scope>NUCLEOTIDE SEQUENCE [LARGE SCALE GENOMIC DNA]</scope>
    <source>
        <strain>ATCC 204508 / S288c</strain>
    </source>
</reference>
<reference key="2">
    <citation type="journal article" date="2014" name="G3 (Bethesda)">
        <title>The reference genome sequence of Saccharomyces cerevisiae: Then and now.</title>
        <authorList>
            <person name="Engel S.R."/>
            <person name="Dietrich F.S."/>
            <person name="Fisk D.G."/>
            <person name="Binkley G."/>
            <person name="Balakrishnan R."/>
            <person name="Costanzo M.C."/>
            <person name="Dwight S.S."/>
            <person name="Hitz B.C."/>
            <person name="Karra K."/>
            <person name="Nash R.S."/>
            <person name="Weng S."/>
            <person name="Wong E.D."/>
            <person name="Lloyd P."/>
            <person name="Skrzypek M.S."/>
            <person name="Miyasato S.R."/>
            <person name="Simison M."/>
            <person name="Cherry J.M."/>
        </authorList>
    </citation>
    <scope>GENOME REANNOTATION</scope>
    <scope>SEQUENCE REVISION TO 402</scope>
    <source>
        <strain>ATCC 204508 / S288c</strain>
    </source>
</reference>
<reference key="3">
    <citation type="journal article" date="2003" name="Nature">
        <title>Global analysis of protein localization in budding yeast.</title>
        <authorList>
            <person name="Huh W.-K."/>
            <person name="Falvo J.V."/>
            <person name="Gerke L.C."/>
            <person name="Carroll A.S."/>
            <person name="Howson R.W."/>
            <person name="Weissman J.S."/>
            <person name="O'Shea E.K."/>
        </authorList>
    </citation>
    <scope>SUBCELLULAR LOCATION [LARGE SCALE ANALYSIS]</scope>
</reference>
<reference key="4">
    <citation type="journal article" date="2003" name="Nature">
        <title>Global analysis of protein expression in yeast.</title>
        <authorList>
            <person name="Ghaemmaghami S."/>
            <person name="Huh W.-K."/>
            <person name="Bower K."/>
            <person name="Howson R.W."/>
            <person name="Belle A."/>
            <person name="Dephoure N."/>
            <person name="O'Shea E.K."/>
            <person name="Weissman J.S."/>
        </authorList>
    </citation>
    <scope>LEVEL OF PROTEIN EXPRESSION [LARGE SCALE ANALYSIS]</scope>
</reference>